<dbReference type="EMBL" id="U11242">
    <property type="protein sequence ID" value="AAA58702.1"/>
    <property type="molecule type" value="Genomic_DNA"/>
</dbReference>
<dbReference type="SMR" id="Q82484"/>
<dbReference type="GO" id="GO:0003677">
    <property type="term" value="F:DNA binding"/>
    <property type="evidence" value="ECO:0007669"/>
    <property type="project" value="InterPro"/>
</dbReference>
<dbReference type="GO" id="GO:0015074">
    <property type="term" value="P:DNA integration"/>
    <property type="evidence" value="ECO:0007669"/>
    <property type="project" value="InterPro"/>
</dbReference>
<dbReference type="GO" id="GO:0006310">
    <property type="term" value="P:DNA recombination"/>
    <property type="evidence" value="ECO:0007669"/>
    <property type="project" value="UniProtKB-KW"/>
</dbReference>
<dbReference type="CDD" id="cd00397">
    <property type="entry name" value="DNA_BRE_C"/>
    <property type="match status" value="1"/>
</dbReference>
<dbReference type="Gene3D" id="1.10.443.10">
    <property type="entry name" value="Intergrase catalytic core"/>
    <property type="match status" value="1"/>
</dbReference>
<dbReference type="InterPro" id="IPR011010">
    <property type="entry name" value="DNA_brk_join_enz"/>
</dbReference>
<dbReference type="InterPro" id="IPR013762">
    <property type="entry name" value="Integrase-like_cat_sf"/>
</dbReference>
<dbReference type="InterPro" id="IPR002104">
    <property type="entry name" value="Integrase_catalytic"/>
</dbReference>
<dbReference type="Pfam" id="PF00589">
    <property type="entry name" value="Phage_integrase"/>
    <property type="match status" value="1"/>
</dbReference>
<dbReference type="SUPFAM" id="SSF56349">
    <property type="entry name" value="DNA breaking-rejoining enzymes"/>
    <property type="match status" value="1"/>
</dbReference>
<dbReference type="PROSITE" id="PS51898">
    <property type="entry name" value="TYR_RECOMBINASE"/>
    <property type="match status" value="1"/>
</dbReference>
<organism>
    <name type="scientific">Heliothis zea nuclear polyhedrosis virus</name>
    <name type="common">HzSNPV</name>
    <name type="synonym">Helicoverpa zea single nucleocapsid nuclear polyhedrosis virus</name>
    <dbReference type="NCBI Taxonomy" id="28290"/>
    <lineage>
        <taxon>Viruses</taxon>
        <taxon>Viruses incertae sedis</taxon>
        <taxon>Naldaviricetes</taxon>
        <taxon>Lefavirales</taxon>
        <taxon>Baculoviridae</taxon>
        <taxon>Alphabaculovirus</taxon>
    </lineage>
</organism>
<protein>
    <recommendedName>
        <fullName>Very late expression factor 1</fullName>
    </recommendedName>
</protein>
<comment type="function">
    <text evidence="1">Involved in very late gene activation.</text>
</comment>
<comment type="similarity">
    <text evidence="2">Belongs to the 'phage' integrase family.</text>
</comment>
<accession>Q82484</accession>
<keyword id="KW-0233">DNA recombination</keyword>
<keyword id="KW-0804">Transcription</keyword>
<keyword id="KW-0805">Transcription regulation</keyword>
<organismHost>
    <name type="scientific">Lepidoptera</name>
    <name type="common">butterflies and moths</name>
    <dbReference type="NCBI Taxonomy" id="7088"/>
</organismHost>
<evidence type="ECO:0000250" key="1"/>
<evidence type="ECO:0000255" key="2">
    <source>
        <dbReference type="PROSITE-ProRule" id="PRU01246"/>
    </source>
</evidence>
<evidence type="ECO:0000256" key="3">
    <source>
        <dbReference type="SAM" id="MobiDB-lite"/>
    </source>
</evidence>
<sequence length="415" mass="48337">MNNHPATLRNESSFNYWKSRIQNHDKFDEIFELTTDRQRCTPDEVKNNSLWSQYMFCKPFAPTTLKSYKSRFIKLIYCLIDDEYLNNYYDTHTLNKEFNSIVQQQPLIKPEELCRRMLELRSVTKETLQLTINFYTNTMNLPEYKIPKQVMLPRDKEIKNIKNNEKNIVLREIINTILDCIEKKIKHLSSEFVHDRGLIRGAIVFCIMLGTGMRINRSRHLSVDDLNTLIKRGKLRQAIGLKRKKHRTSNSLNSIKQKPLELAREIYIKNPNILNISKNTSTPFKDFKRLLKEANVEMDRPRSNMIRHYLSSNLYNNGMPLQKVARLMNHESSASTRHYLNKYDVGVDESDDNDEDDDDDENDDRIIDENPSGANISNYDINNSSSGNSSSNNTSGNDFNNNISSGDDADLLSFN</sequence>
<name>VLF1_NPVHZ</name>
<proteinExistence type="inferred from homology"/>
<feature type="chain" id="PRO_0000132877" description="Very late expression factor 1">
    <location>
        <begin position="1"/>
        <end position="415"/>
    </location>
</feature>
<feature type="domain" description="Tyr recombinase" evidence="2">
    <location>
        <begin position="171"/>
        <end position="357"/>
    </location>
</feature>
<feature type="region of interest" description="Disordered" evidence="3">
    <location>
        <begin position="339"/>
        <end position="415"/>
    </location>
</feature>
<feature type="compositionally biased region" description="Acidic residues" evidence="3">
    <location>
        <begin position="346"/>
        <end position="363"/>
    </location>
</feature>
<feature type="compositionally biased region" description="Low complexity" evidence="3">
    <location>
        <begin position="375"/>
        <end position="404"/>
    </location>
</feature>
<feature type="active site" evidence="2">
    <location>
        <position position="214"/>
    </location>
</feature>
<feature type="active site" evidence="2">
    <location>
        <position position="242"/>
    </location>
</feature>
<feature type="active site" evidence="2">
    <location>
        <position position="307"/>
    </location>
</feature>
<feature type="active site" evidence="2">
    <location>
        <position position="330"/>
    </location>
</feature>
<feature type="active site" description="O-(3'-phospho-DNA)-tyrosine intermediate" evidence="2">
    <location>
        <position position="343"/>
    </location>
</feature>
<gene>
    <name type="primary">VLF-1</name>
</gene>
<reference key="1">
    <citation type="journal article" date="1994" name="J. Gen. Virol.">
        <title>Nucleotide sequence of the polyhedrin gene region of Helicoverpa zea single nucleocapsid nuclear polyhedrosis virus: placement of the virus in lepidopteran nuclear polyhedrosis virus group II.</title>
        <authorList>
            <person name="Cowan P.J."/>
            <person name="Bulach D.M."/>
            <person name="Goodge K."/>
            <person name="Robertson A."/>
            <person name="Tribe D.E."/>
        </authorList>
    </citation>
    <scope>NUCLEOTIDE SEQUENCE [GENOMIC DNA]</scope>
    <source>
        <strain>Elkar</strain>
    </source>
</reference>